<keyword id="KW-0030">Aminoacyl-tRNA synthetase</keyword>
<keyword id="KW-0067">ATP-binding</keyword>
<keyword id="KW-0963">Cytoplasm</keyword>
<keyword id="KW-0436">Ligase</keyword>
<keyword id="KW-0479">Metal-binding</keyword>
<keyword id="KW-0547">Nucleotide-binding</keyword>
<keyword id="KW-0648">Protein biosynthesis</keyword>
<keyword id="KW-1185">Reference proteome</keyword>
<keyword id="KW-0862">Zinc</keyword>
<dbReference type="EC" id="6.1.1.5" evidence="1"/>
<dbReference type="EMBL" id="CP000786">
    <property type="protein sequence ID" value="ABZ98385.1"/>
    <property type="molecule type" value="Genomic_DNA"/>
</dbReference>
<dbReference type="RefSeq" id="WP_012389250.1">
    <property type="nucleotide sequence ID" value="NC_010602.1"/>
</dbReference>
<dbReference type="SMR" id="B0STE5"/>
<dbReference type="STRING" id="456481.LEPBI_I2290"/>
<dbReference type="KEGG" id="lbi:LEPBI_I2290"/>
<dbReference type="HOGENOM" id="CLU_001493_7_0_12"/>
<dbReference type="OrthoDB" id="9810365at2"/>
<dbReference type="BioCyc" id="LBIF456481:LEPBI_RS11300-MONOMER"/>
<dbReference type="Proteomes" id="UP000001847">
    <property type="component" value="Chromosome I"/>
</dbReference>
<dbReference type="GO" id="GO:0005829">
    <property type="term" value="C:cytosol"/>
    <property type="evidence" value="ECO:0007669"/>
    <property type="project" value="TreeGrafter"/>
</dbReference>
<dbReference type="GO" id="GO:0002161">
    <property type="term" value="F:aminoacyl-tRNA deacylase activity"/>
    <property type="evidence" value="ECO:0007669"/>
    <property type="project" value="InterPro"/>
</dbReference>
<dbReference type="GO" id="GO:0005524">
    <property type="term" value="F:ATP binding"/>
    <property type="evidence" value="ECO:0007669"/>
    <property type="project" value="UniProtKB-UniRule"/>
</dbReference>
<dbReference type="GO" id="GO:0004822">
    <property type="term" value="F:isoleucine-tRNA ligase activity"/>
    <property type="evidence" value="ECO:0007669"/>
    <property type="project" value="UniProtKB-UniRule"/>
</dbReference>
<dbReference type="GO" id="GO:0000049">
    <property type="term" value="F:tRNA binding"/>
    <property type="evidence" value="ECO:0007669"/>
    <property type="project" value="InterPro"/>
</dbReference>
<dbReference type="GO" id="GO:0008270">
    <property type="term" value="F:zinc ion binding"/>
    <property type="evidence" value="ECO:0007669"/>
    <property type="project" value="UniProtKB-UniRule"/>
</dbReference>
<dbReference type="GO" id="GO:0006428">
    <property type="term" value="P:isoleucyl-tRNA aminoacylation"/>
    <property type="evidence" value="ECO:0007669"/>
    <property type="project" value="UniProtKB-UniRule"/>
</dbReference>
<dbReference type="CDD" id="cd07960">
    <property type="entry name" value="Anticodon_Ia_Ile_BEm"/>
    <property type="match status" value="1"/>
</dbReference>
<dbReference type="CDD" id="cd00818">
    <property type="entry name" value="IleRS_core"/>
    <property type="match status" value="1"/>
</dbReference>
<dbReference type="Gene3D" id="1.10.730.20">
    <property type="match status" value="1"/>
</dbReference>
<dbReference type="Gene3D" id="3.40.50.620">
    <property type="entry name" value="HUPs"/>
    <property type="match status" value="2"/>
</dbReference>
<dbReference type="Gene3D" id="1.10.10.830">
    <property type="entry name" value="Ile-tRNA synthetase CP2 domain-like"/>
    <property type="match status" value="1"/>
</dbReference>
<dbReference type="HAMAP" id="MF_02002">
    <property type="entry name" value="Ile_tRNA_synth_type1"/>
    <property type="match status" value="1"/>
</dbReference>
<dbReference type="InterPro" id="IPR001412">
    <property type="entry name" value="aa-tRNA-synth_I_CS"/>
</dbReference>
<dbReference type="InterPro" id="IPR002300">
    <property type="entry name" value="aa-tRNA-synth_Ia"/>
</dbReference>
<dbReference type="InterPro" id="IPR033708">
    <property type="entry name" value="Anticodon_Ile_BEm"/>
</dbReference>
<dbReference type="InterPro" id="IPR002301">
    <property type="entry name" value="Ile-tRNA-ligase"/>
</dbReference>
<dbReference type="InterPro" id="IPR023585">
    <property type="entry name" value="Ile-tRNA-ligase_type1"/>
</dbReference>
<dbReference type="InterPro" id="IPR050081">
    <property type="entry name" value="Ile-tRNA_ligase"/>
</dbReference>
<dbReference type="InterPro" id="IPR013155">
    <property type="entry name" value="M/V/L/I-tRNA-synth_anticd-bd"/>
</dbReference>
<dbReference type="InterPro" id="IPR014729">
    <property type="entry name" value="Rossmann-like_a/b/a_fold"/>
</dbReference>
<dbReference type="InterPro" id="IPR009080">
    <property type="entry name" value="tRNAsynth_Ia_anticodon-bd"/>
</dbReference>
<dbReference type="InterPro" id="IPR009008">
    <property type="entry name" value="Val/Leu/Ile-tRNA-synth_edit"/>
</dbReference>
<dbReference type="NCBIfam" id="TIGR00392">
    <property type="entry name" value="ileS"/>
    <property type="match status" value="1"/>
</dbReference>
<dbReference type="PANTHER" id="PTHR42765:SF1">
    <property type="entry name" value="ISOLEUCINE--TRNA LIGASE, MITOCHONDRIAL"/>
    <property type="match status" value="1"/>
</dbReference>
<dbReference type="PANTHER" id="PTHR42765">
    <property type="entry name" value="SOLEUCYL-TRNA SYNTHETASE"/>
    <property type="match status" value="1"/>
</dbReference>
<dbReference type="Pfam" id="PF08264">
    <property type="entry name" value="Anticodon_1"/>
    <property type="match status" value="1"/>
</dbReference>
<dbReference type="Pfam" id="PF00133">
    <property type="entry name" value="tRNA-synt_1"/>
    <property type="match status" value="1"/>
</dbReference>
<dbReference type="PRINTS" id="PR00984">
    <property type="entry name" value="TRNASYNTHILE"/>
</dbReference>
<dbReference type="SUPFAM" id="SSF47323">
    <property type="entry name" value="Anticodon-binding domain of a subclass of class I aminoacyl-tRNA synthetases"/>
    <property type="match status" value="1"/>
</dbReference>
<dbReference type="SUPFAM" id="SSF52374">
    <property type="entry name" value="Nucleotidylyl transferase"/>
    <property type="match status" value="1"/>
</dbReference>
<dbReference type="SUPFAM" id="SSF50677">
    <property type="entry name" value="ValRS/IleRS/LeuRS editing domain"/>
    <property type="match status" value="1"/>
</dbReference>
<dbReference type="PROSITE" id="PS00178">
    <property type="entry name" value="AA_TRNA_LIGASE_I"/>
    <property type="match status" value="1"/>
</dbReference>
<sequence length="915" mass="104704">MAKPETENPYSKTVLLPETSFPMKADLAKREPGQIKVWKDQKVFLNMKEIRKSKPSFVLHDGPPYANGNFHVGHSLNKILKDIIIKSKTLSGYQTDMIPGWDCHGLPIEVQVLKNLGKEARNTGPSELRKKCREYAAEFVGKQGEDLNRFLCFWDENNKYLTMAPEFEARIVEVFGSLFAKGYIYKGKKPVYWCIDLATAHAEAEIEYQNHVSPSIYVKFAVKGETDTHCLIWTTTPWTLPANLAICFNEELPYSLFQSDAHGRLILADGLKEAVEQKTGITLTKIKSLSNADLKQMVFLHPFLDRESIPLFGNHVTLDAGTGCVHTAPGHGTDDYRVGTAAGLPTLSPVDDYGRYTDEFEMMKGIKIWDANPKIVELLREKNALVHFSEFTHSYPHSWRSKKPLIFRATPQWFFSIDHNGLRDESLKAIDKVQWIPDWGITRIRSMVESRPDWCLSRQRNWGVPIPSFTCKSCGLTHLDDKTIQHFIQIVKKEGIEVWYEKEAKDLLPADTKCSNCGSEDLKQDKDILDVWFDSGVSSFAVFGDSIGKEPADLYLEGSDQHRGWFQSSLWPSMAIRKTPPYKSVLTHGYVLDEKGHAMSKSLGNVINPTTDIINQYGADILRLWVSTQDFRDDVKIGKDSIKTVSEAYRKIRNTFRYLLGNTSAETLTWNLKKEELDTIDKYYLHKLAKLNDEVKKLYDTYQFHQVYHKILGFCTVDLSQDYFEIIRDRMYCDAKESKTRRSSEYTLAVILEVLSKLLAPILSFTTEEVWTSFGKKDSVFYSDFSDLTEWLDESLESKMKPVFETKEDVQKALEEARKLGKLGKSLEAEVVIDGKKDSLPFSSEELALFFVVSHVHFETNGIQEVFSEWKGESGSIQIRKPKHFECPRCWRHVSETEGKLCKRCDEVVSKLSPN</sequence>
<comment type="function">
    <text evidence="1">Catalyzes the attachment of isoleucine to tRNA(Ile). As IleRS can inadvertently accommodate and process structurally similar amino acids such as valine, to avoid such errors it has two additional distinct tRNA(Ile)-dependent editing activities. One activity is designated as 'pretransfer' editing and involves the hydrolysis of activated Val-AMP. The other activity is designated 'posttransfer' editing and involves deacylation of mischarged Val-tRNA(Ile).</text>
</comment>
<comment type="catalytic activity">
    <reaction evidence="1">
        <text>tRNA(Ile) + L-isoleucine + ATP = L-isoleucyl-tRNA(Ile) + AMP + diphosphate</text>
        <dbReference type="Rhea" id="RHEA:11060"/>
        <dbReference type="Rhea" id="RHEA-COMP:9666"/>
        <dbReference type="Rhea" id="RHEA-COMP:9695"/>
        <dbReference type="ChEBI" id="CHEBI:30616"/>
        <dbReference type="ChEBI" id="CHEBI:33019"/>
        <dbReference type="ChEBI" id="CHEBI:58045"/>
        <dbReference type="ChEBI" id="CHEBI:78442"/>
        <dbReference type="ChEBI" id="CHEBI:78528"/>
        <dbReference type="ChEBI" id="CHEBI:456215"/>
        <dbReference type="EC" id="6.1.1.5"/>
    </reaction>
</comment>
<comment type="cofactor">
    <cofactor evidence="1">
        <name>Zn(2+)</name>
        <dbReference type="ChEBI" id="CHEBI:29105"/>
    </cofactor>
    <text evidence="1">Binds 1 zinc ion per subunit.</text>
</comment>
<comment type="subunit">
    <text evidence="1">Monomer.</text>
</comment>
<comment type="subcellular location">
    <subcellularLocation>
        <location evidence="1">Cytoplasm</location>
    </subcellularLocation>
</comment>
<comment type="domain">
    <text evidence="1">IleRS has two distinct active sites: one for aminoacylation and one for editing. The misactivated valine is translocated from the active site to the editing site, which sterically excludes the correctly activated isoleucine. The single editing site contains two valyl binding pockets, one specific for each substrate (Val-AMP or Val-tRNA(Ile)).</text>
</comment>
<comment type="similarity">
    <text evidence="1">Belongs to the class-I aminoacyl-tRNA synthetase family. IleS type 1 subfamily.</text>
</comment>
<gene>
    <name evidence="1" type="primary">ileS</name>
    <name type="ordered locus">LEPBI_I2290</name>
</gene>
<accession>B0STE5</accession>
<name>SYI_LEPBP</name>
<reference key="1">
    <citation type="journal article" date="2008" name="PLoS ONE">
        <title>Genome sequence of the saprophyte Leptospira biflexa provides insights into the evolution of Leptospira and the pathogenesis of leptospirosis.</title>
        <authorList>
            <person name="Picardeau M."/>
            <person name="Bulach D.M."/>
            <person name="Bouchier C."/>
            <person name="Zuerner R.L."/>
            <person name="Zidane N."/>
            <person name="Wilson P.J."/>
            <person name="Creno S."/>
            <person name="Kuczek E.S."/>
            <person name="Bommezzadri S."/>
            <person name="Davis J.C."/>
            <person name="McGrath A."/>
            <person name="Johnson M.J."/>
            <person name="Boursaux-Eude C."/>
            <person name="Seemann T."/>
            <person name="Rouy Z."/>
            <person name="Coppel R.L."/>
            <person name="Rood J.I."/>
            <person name="Lajus A."/>
            <person name="Davies J.K."/>
            <person name="Medigue C."/>
            <person name="Adler B."/>
        </authorList>
    </citation>
    <scope>NUCLEOTIDE SEQUENCE [LARGE SCALE GENOMIC DNA]</scope>
    <source>
        <strain>Patoc 1 / ATCC 23582 / Paris</strain>
    </source>
</reference>
<protein>
    <recommendedName>
        <fullName evidence="1">Isoleucine--tRNA ligase</fullName>
        <ecNumber evidence="1">6.1.1.5</ecNumber>
    </recommendedName>
    <alternativeName>
        <fullName evidence="1">Isoleucyl-tRNA synthetase</fullName>
        <shortName evidence="1">IleRS</shortName>
    </alternativeName>
</protein>
<proteinExistence type="inferred from homology"/>
<feature type="chain" id="PRO_1000189178" description="Isoleucine--tRNA ligase">
    <location>
        <begin position="1"/>
        <end position="915"/>
    </location>
</feature>
<feature type="short sequence motif" description="'HIGH' region">
    <location>
        <begin position="64"/>
        <end position="74"/>
    </location>
</feature>
<feature type="short sequence motif" description="'KMSKS' region">
    <location>
        <begin position="598"/>
        <end position="602"/>
    </location>
</feature>
<feature type="binding site" evidence="1">
    <location>
        <position position="557"/>
    </location>
    <ligand>
        <name>L-isoleucyl-5'-AMP</name>
        <dbReference type="ChEBI" id="CHEBI:178002"/>
    </ligand>
</feature>
<feature type="binding site" evidence="1">
    <location>
        <position position="601"/>
    </location>
    <ligand>
        <name>ATP</name>
        <dbReference type="ChEBI" id="CHEBI:30616"/>
    </ligand>
</feature>
<feature type="binding site" evidence="1">
    <location>
        <position position="887"/>
    </location>
    <ligand>
        <name>Zn(2+)</name>
        <dbReference type="ChEBI" id="CHEBI:29105"/>
    </ligand>
</feature>
<feature type="binding site" evidence="1">
    <location>
        <position position="890"/>
    </location>
    <ligand>
        <name>Zn(2+)</name>
        <dbReference type="ChEBI" id="CHEBI:29105"/>
    </ligand>
</feature>
<feature type="binding site" evidence="1">
    <location>
        <position position="902"/>
    </location>
    <ligand>
        <name>Zn(2+)</name>
        <dbReference type="ChEBI" id="CHEBI:29105"/>
    </ligand>
</feature>
<feature type="binding site" evidence="1">
    <location>
        <position position="905"/>
    </location>
    <ligand>
        <name>Zn(2+)</name>
        <dbReference type="ChEBI" id="CHEBI:29105"/>
    </ligand>
</feature>
<evidence type="ECO:0000255" key="1">
    <source>
        <dbReference type="HAMAP-Rule" id="MF_02002"/>
    </source>
</evidence>
<organism>
    <name type="scientific">Leptospira biflexa serovar Patoc (strain Patoc 1 / ATCC 23582 / Paris)</name>
    <dbReference type="NCBI Taxonomy" id="456481"/>
    <lineage>
        <taxon>Bacteria</taxon>
        <taxon>Pseudomonadati</taxon>
        <taxon>Spirochaetota</taxon>
        <taxon>Spirochaetia</taxon>
        <taxon>Leptospirales</taxon>
        <taxon>Leptospiraceae</taxon>
        <taxon>Leptospira</taxon>
    </lineage>
</organism>